<feature type="chain" id="PRO_0000357452" description="Transcriptional adapter 3">
    <location>
        <begin position="1"/>
        <end position="432"/>
    </location>
</feature>
<feature type="region of interest" description="Disordered" evidence="4">
    <location>
        <begin position="87"/>
        <end position="127"/>
    </location>
</feature>
<feature type="region of interest" description="Disordered" evidence="4">
    <location>
        <begin position="211"/>
        <end position="257"/>
    </location>
</feature>
<feature type="region of interest" description="Disordered" evidence="4">
    <location>
        <begin position="271"/>
        <end position="319"/>
    </location>
</feature>
<feature type="coiled-coil region" evidence="3">
    <location>
        <begin position="40"/>
        <end position="69"/>
    </location>
</feature>
<feature type="coiled-coil region" evidence="3">
    <location>
        <begin position="367"/>
        <end position="407"/>
    </location>
</feature>
<feature type="compositionally biased region" description="Basic and acidic residues" evidence="4">
    <location>
        <begin position="211"/>
        <end position="223"/>
    </location>
</feature>
<feature type="compositionally biased region" description="Basic and acidic residues" evidence="4">
    <location>
        <begin position="232"/>
        <end position="251"/>
    </location>
</feature>
<feature type="compositionally biased region" description="Polar residues" evidence="4">
    <location>
        <begin position="295"/>
        <end position="305"/>
    </location>
</feature>
<feature type="modified residue" description="Phosphoserine" evidence="2">
    <location>
        <position position="280"/>
    </location>
</feature>
<feature type="modified residue" description="Phosphoserine" evidence="2">
    <location>
        <position position="298"/>
    </location>
</feature>
<feature type="modified residue" description="N6-acetyllysine" evidence="2">
    <location>
        <position position="418"/>
    </location>
</feature>
<feature type="cross-link" description="Glycyl lysine isopeptide (Lys-Gly) (interchain with G-Cter in SUMO2)" evidence="2">
    <location>
        <position position="21"/>
    </location>
</feature>
<feature type="cross-link" description="Glycyl lysine isopeptide (Lys-Gly) (interchain with G-Cter in SUMO2)" evidence="2">
    <location>
        <position position="129"/>
    </location>
</feature>
<protein>
    <recommendedName>
        <fullName>Transcriptional adapter 3</fullName>
    </recommendedName>
    <alternativeName>
        <fullName>ADA3 homolog</fullName>
    </alternativeName>
    <alternativeName>
        <fullName>Transcriptional adapter 3-like</fullName>
        <shortName>ADA3-like protein</shortName>
    </alternativeName>
</protein>
<reference key="1">
    <citation type="submission" date="2004-11" db="EMBL/GenBank/DDBJ databases">
        <authorList>
            <consortium name="The German cDNA consortium"/>
        </authorList>
    </citation>
    <scope>NUCLEOTIDE SEQUENCE [LARGE SCALE MRNA]</scope>
    <source>
        <tissue>Brain cortex</tissue>
    </source>
</reference>
<accession>Q5R5V0</accession>
<comment type="function">
    <text evidence="1">Functions as a component of the PCAF complex. The PCAF complex is capable of efficiently acetylating histones in a nucleosomal context. The PCAF complex could be considered as the human version of the yeast SAGA complex. Also known as a coactivator for p53/TP53-dependent transcriptional activation (By similarity). Component of the ATAC complex, a complex with histone acetyltransferase activity on histones H3 and H4 (By similarity).</text>
</comment>
<comment type="subunit">
    <text evidence="1">The PCAF complex is composed of a number of TBP-associated factors (TAFS), such as TAF5, TAF5L, TAF6, TAF6L, TAF9, TAF10 and TAF12, PCAF, and also PCAF-associated factors (PAFs), such as TADA2L/ADA2, TADA3L/ADA3 and SPT3. Interacts directly with TADA2L and PCAF and also with the high-risk HPV oncoprotein E6. Component of the STAGA transcription coactivator-HAT complex, at least composed of SUPT3H, GCN5L2, TAF5L, TAF6L, SUPT7L, TADA3L, TAD1L, TAF10, TAF12, TRRAP and TAF9. Component of the TFTC-HAT complex (By similarity). Component of the ADA2A-containing complex (ATAC), composed of KAT14, KAT2A, TADA2L, TADA3L, ZZ3, MBIP, WDR5, YEATS2, CCDC101 and DR1 (By similarity).</text>
</comment>
<comment type="subcellular location">
    <subcellularLocation>
        <location evidence="1">Nucleus</location>
    </subcellularLocation>
</comment>
<comment type="similarity">
    <text evidence="5">Belongs to the NGG1 family.</text>
</comment>
<dbReference type="EMBL" id="CR860753">
    <property type="protein sequence ID" value="CAH92866.1"/>
    <property type="molecule type" value="mRNA"/>
</dbReference>
<dbReference type="RefSeq" id="NP_001127599.1">
    <property type="nucleotide sequence ID" value="NM_001134127.1"/>
</dbReference>
<dbReference type="SMR" id="Q5R5V0"/>
<dbReference type="STRING" id="9601.ENSPPYP00000015293"/>
<dbReference type="GeneID" id="100174678"/>
<dbReference type="KEGG" id="pon:100174678"/>
<dbReference type="CTD" id="10474"/>
<dbReference type="eggNOG" id="KOG4191">
    <property type="taxonomic scope" value="Eukaryota"/>
</dbReference>
<dbReference type="InParanoid" id="Q5R5V0"/>
<dbReference type="OrthoDB" id="1232at2759"/>
<dbReference type="Proteomes" id="UP000001595">
    <property type="component" value="Unplaced"/>
</dbReference>
<dbReference type="GO" id="GO:0005634">
    <property type="term" value="C:nucleus"/>
    <property type="evidence" value="ECO:0007669"/>
    <property type="project" value="UniProtKB-SubCell"/>
</dbReference>
<dbReference type="GO" id="GO:0000124">
    <property type="term" value="C:SAGA complex"/>
    <property type="evidence" value="ECO:0007669"/>
    <property type="project" value="TreeGrafter"/>
</dbReference>
<dbReference type="GO" id="GO:0003713">
    <property type="term" value="F:transcription coactivator activity"/>
    <property type="evidence" value="ECO:0007669"/>
    <property type="project" value="TreeGrafter"/>
</dbReference>
<dbReference type="GO" id="GO:0006357">
    <property type="term" value="P:regulation of transcription by RNA polymerase II"/>
    <property type="evidence" value="ECO:0007669"/>
    <property type="project" value="TreeGrafter"/>
</dbReference>
<dbReference type="InterPro" id="IPR019340">
    <property type="entry name" value="Histone_AcTrfase_su3"/>
</dbReference>
<dbReference type="PANTHER" id="PTHR13556:SF2">
    <property type="entry name" value="TRANSCRIPTIONAL ADAPTER 3"/>
    <property type="match status" value="1"/>
</dbReference>
<dbReference type="PANTHER" id="PTHR13556">
    <property type="entry name" value="TRANSCRIPTIONAL ADAPTER 3-RELATED"/>
    <property type="match status" value="1"/>
</dbReference>
<dbReference type="Pfam" id="PF10198">
    <property type="entry name" value="Ada3"/>
    <property type="match status" value="1"/>
</dbReference>
<name>TADA3_PONAB</name>
<sequence>MSELKDCPLQFHDFKSVDHLKVCPRYTAVLARSEDDGIGIEELDTLQLELETLLSSASRRLRVLEAETQILTDWQDKKGDRRFLKLGRDHELGAPPKHGKPKKQKLEGKAGHGPGPGPGRPKSKNLQPKVQEYEFTDDPIDVPRIPKNDAPNRFWASVEPYCADITSEEVRTLEELLKPPEDEAEHYKIPPLGKHYSQRWAQEDLLEEQKDGARAAAVADKKKGLMGPLTELDTKDVDALPKKSEAQHEQPEDGCPFGALTQRLLQALVEENIISPMEDSPIPDMSGKESGADGASTSPRNQNKPFSVPHTKSLESRIKEELIAQGLLESEDRPAEDSEDEVLAELRKRQAELKALSAHNRTKKHDLLRLAKEEVSRQELRQRVRMADNEVMDAFRKIMAARQKKRTPTKKEKDQAWKTLKERESILKLLDG</sequence>
<gene>
    <name type="primary">TADA3</name>
    <name type="synonym">ADA3</name>
    <name type="synonym">TADA3L</name>
</gene>
<organism>
    <name type="scientific">Pongo abelii</name>
    <name type="common">Sumatran orangutan</name>
    <name type="synonym">Pongo pygmaeus abelii</name>
    <dbReference type="NCBI Taxonomy" id="9601"/>
    <lineage>
        <taxon>Eukaryota</taxon>
        <taxon>Metazoa</taxon>
        <taxon>Chordata</taxon>
        <taxon>Craniata</taxon>
        <taxon>Vertebrata</taxon>
        <taxon>Euteleostomi</taxon>
        <taxon>Mammalia</taxon>
        <taxon>Eutheria</taxon>
        <taxon>Euarchontoglires</taxon>
        <taxon>Primates</taxon>
        <taxon>Haplorrhini</taxon>
        <taxon>Catarrhini</taxon>
        <taxon>Hominidae</taxon>
        <taxon>Pongo</taxon>
    </lineage>
</organism>
<keyword id="KW-0007">Acetylation</keyword>
<keyword id="KW-0175">Coiled coil</keyword>
<keyword id="KW-1017">Isopeptide bond</keyword>
<keyword id="KW-0539">Nucleus</keyword>
<keyword id="KW-0597">Phosphoprotein</keyword>
<keyword id="KW-1185">Reference proteome</keyword>
<keyword id="KW-0804">Transcription</keyword>
<keyword id="KW-0805">Transcription regulation</keyword>
<keyword id="KW-0832">Ubl conjugation</keyword>
<evidence type="ECO:0000250" key="1"/>
<evidence type="ECO:0000250" key="2">
    <source>
        <dbReference type="UniProtKB" id="O75528"/>
    </source>
</evidence>
<evidence type="ECO:0000255" key="3"/>
<evidence type="ECO:0000256" key="4">
    <source>
        <dbReference type="SAM" id="MobiDB-lite"/>
    </source>
</evidence>
<evidence type="ECO:0000305" key="5"/>
<proteinExistence type="evidence at transcript level"/>